<gene>
    <name type="primary">sop2</name>
    <name type="synonym">sopII</name>
</gene>
<dbReference type="EMBL" id="Z35308">
    <property type="protein sequence ID" value="CAA84550.1"/>
    <property type="molecule type" value="Genomic_DNA"/>
</dbReference>
<dbReference type="PIR" id="S55297">
    <property type="entry name" value="S55297"/>
</dbReference>
<dbReference type="SMR" id="P42197"/>
<dbReference type="STRING" id="28442.SAMN05443574_101538"/>
<dbReference type="GO" id="GO:0005886">
    <property type="term" value="C:plasma membrane"/>
    <property type="evidence" value="ECO:0007669"/>
    <property type="project" value="UniProtKB-SubCell"/>
</dbReference>
<dbReference type="GO" id="GO:0005216">
    <property type="term" value="F:monoatomic ion channel activity"/>
    <property type="evidence" value="ECO:0007669"/>
    <property type="project" value="InterPro"/>
</dbReference>
<dbReference type="GO" id="GO:0009881">
    <property type="term" value="F:photoreceptor activity"/>
    <property type="evidence" value="ECO:0007669"/>
    <property type="project" value="UniProtKB-KW"/>
</dbReference>
<dbReference type="GO" id="GO:0007602">
    <property type="term" value="P:phototransduction"/>
    <property type="evidence" value="ECO:0007669"/>
    <property type="project" value="UniProtKB-KW"/>
</dbReference>
<dbReference type="CDD" id="cd15029">
    <property type="entry name" value="7tm_SRI_SRII"/>
    <property type="match status" value="1"/>
</dbReference>
<dbReference type="Gene3D" id="1.20.1070.10">
    <property type="entry name" value="Rhodopsin 7-helix transmembrane proteins"/>
    <property type="match status" value="1"/>
</dbReference>
<dbReference type="InterPro" id="IPR001425">
    <property type="entry name" value="Arc/bac/fun_rhodopsins"/>
</dbReference>
<dbReference type="InterPro" id="IPR018229">
    <property type="entry name" value="Rhodopsin_retinal_BS"/>
</dbReference>
<dbReference type="PANTHER" id="PTHR28286">
    <property type="match status" value="1"/>
</dbReference>
<dbReference type="PANTHER" id="PTHR28286:SF2">
    <property type="entry name" value="BACTERIORHODOPSIN _OPSIN, NOPA (EUROFUNG)"/>
    <property type="match status" value="1"/>
</dbReference>
<dbReference type="Pfam" id="PF01036">
    <property type="entry name" value="Bac_rhodopsin"/>
    <property type="match status" value="1"/>
</dbReference>
<dbReference type="PRINTS" id="PR00251">
    <property type="entry name" value="BACTRLOPSIN"/>
</dbReference>
<dbReference type="SMART" id="SM01021">
    <property type="entry name" value="Bac_rhodopsin"/>
    <property type="match status" value="1"/>
</dbReference>
<dbReference type="SUPFAM" id="SSF81321">
    <property type="entry name" value="Family A G protein-coupled receptor-like"/>
    <property type="match status" value="1"/>
</dbReference>
<dbReference type="PROSITE" id="PS00950">
    <property type="entry name" value="BACTERIAL_OPSIN_1"/>
    <property type="match status" value="1"/>
</dbReference>
<dbReference type="PROSITE" id="PS00327">
    <property type="entry name" value="BACTERIAL_OPSIN_RET"/>
    <property type="match status" value="1"/>
</dbReference>
<feature type="chain" id="PRO_0000196281" description="Sensory rhodopsin-2">
    <location>
        <begin position="1"/>
        <end position="236"/>
    </location>
</feature>
<feature type="topological domain" description="Extracellular" evidence="1">
    <location>
        <begin position="1"/>
        <end position="3"/>
    </location>
</feature>
<feature type="transmembrane region" description="Helical; Name=Helix A" evidence="1">
    <location>
        <begin position="4"/>
        <end position="25"/>
    </location>
</feature>
<feature type="topological domain" description="Cytoplasmic" evidence="1">
    <location>
        <begin position="26"/>
        <end position="33"/>
    </location>
</feature>
<feature type="transmembrane region" description="Helical; Name=Helix B" evidence="1">
    <location>
        <begin position="34"/>
        <end position="55"/>
    </location>
</feature>
<feature type="topological domain" description="Extracellular" evidence="1">
    <location>
        <begin position="56"/>
        <end position="69"/>
    </location>
</feature>
<feature type="transmembrane region" description="Helical; Name=Helix C" evidence="1">
    <location>
        <begin position="70"/>
        <end position="91"/>
    </location>
</feature>
<feature type="topological domain" description="Cytoplasmic" evidence="1">
    <location>
        <begin position="92"/>
        <end position="94"/>
    </location>
</feature>
<feature type="transmembrane region" description="Helical; Name=Helix D" evidence="1">
    <location>
        <begin position="95"/>
        <end position="117"/>
    </location>
</feature>
<feature type="topological domain" description="Extracellular" evidence="1">
    <location>
        <begin position="118"/>
        <end position="121"/>
    </location>
</feature>
<feature type="transmembrane region" description="Helical; Name=Helix E" evidence="1">
    <location>
        <begin position="122"/>
        <end position="149"/>
    </location>
</feature>
<feature type="topological domain" description="Cytoplasmic" evidence="1">
    <location>
        <begin position="150"/>
        <end position="153"/>
    </location>
</feature>
<feature type="transmembrane region" description="Helical; Name=Helix F" evidence="1">
    <location>
        <begin position="154"/>
        <end position="182"/>
    </location>
</feature>
<feature type="topological domain" description="Extracellular" evidence="1">
    <location>
        <begin position="183"/>
        <end position="190"/>
    </location>
</feature>
<feature type="transmembrane region" description="Helical; Name=Helix G" evidence="1">
    <location>
        <begin position="191"/>
        <end position="236"/>
    </location>
</feature>
<feature type="modified residue" description="N6-(retinylidene)lysine" evidence="1">
    <location>
        <position position="206"/>
    </location>
</feature>
<keyword id="KW-1003">Cell membrane</keyword>
<keyword id="KW-0157">Chromophore</keyword>
<keyword id="KW-0472">Membrane</keyword>
<keyword id="KW-0600">Photoreceptor protein</keyword>
<keyword id="KW-0675">Receptor</keyword>
<keyword id="KW-0681">Retinal protein</keyword>
<keyword id="KW-0716">Sensory transduction</keyword>
<keyword id="KW-0812">Transmembrane</keyword>
<keyword id="KW-1133">Transmembrane helix</keyword>
<evidence type="ECO:0000250" key="1"/>
<evidence type="ECO:0000305" key="2"/>
<name>BACS2_HALVA</name>
<protein>
    <recommendedName>
        <fullName>Sensory rhodopsin-2</fullName>
    </recommendedName>
    <alternativeName>
        <fullName>Sensory rhodopsin II</fullName>
        <shortName>SR-II</shortName>
    </alternativeName>
</protein>
<organism>
    <name type="scientific">Haloarcula vallismortis</name>
    <name type="common">Halobacterium vallismortis</name>
    <dbReference type="NCBI Taxonomy" id="28442"/>
    <lineage>
        <taxon>Archaea</taxon>
        <taxon>Methanobacteriati</taxon>
        <taxon>Methanobacteriota</taxon>
        <taxon>Stenosarchaea group</taxon>
        <taxon>Halobacteria</taxon>
        <taxon>Halobacteriales</taxon>
        <taxon>Haloarculaceae</taxon>
        <taxon>Haloarcula</taxon>
    </lineage>
</organism>
<sequence>MATITTWFTLGLLGELLGTAVLAYGYTLVPEETRKRYLLLIAIPGIAIVAYALMALGFGSIQSEGHAVYVVRYVDWLLTTPLNVWFLALLAGASREDTVKLVVLQALTIVFGFAGAVTPSPVSYALFAVGGALFGGVIYLLYRNIAVAAKSTLSDIEVSLYRTLRNFVVVLWLVYPVVWLLGAAGVGLMDVETATLVVVYLDVVTKVGFGVIALLAMIDLGSAGETAEEPTAVAGD</sequence>
<accession>P42197</accession>
<reference key="1">
    <citation type="journal article" date="1995" name="Proc. Natl. Acad. Sci. U.S.A.">
        <title>The primary structure of sensory rhodopsin II: a member of an additional retinal protein subgroup is coexpressed with its transducer, the halobacterial transducer of rhodopsin II.</title>
        <authorList>
            <person name="Seidel R."/>
            <person name="Scharf B."/>
            <person name="Gautel M."/>
            <person name="Kleine K."/>
            <person name="Oesterhelt D."/>
            <person name="Engelhard M."/>
        </authorList>
    </citation>
    <scope>NUCLEOTIDE SEQUENCE [GENOMIC DNA]</scope>
    <source>
        <strain>ATCC 29715 / DSM 3756 / JCM 8877 / NBRC 14741 / NCIMB 2082</strain>
    </source>
</reference>
<proteinExistence type="inferred from homology"/>
<comment type="function">
    <text evidence="1">Photophobic photoreceptor responsible for the negative phototaxis. Activates the sensory rhodopsin II transducer (HTR-II) in response to blue light (By similarity).</text>
</comment>
<comment type="subunit">
    <text evidence="1">Interacts with HTR-II.</text>
</comment>
<comment type="subcellular location">
    <subcellularLocation>
        <location evidence="1">Cell membrane</location>
        <topology evidence="1">Multi-pass membrane protein</topology>
    </subcellularLocation>
</comment>
<comment type="similarity">
    <text evidence="2">Belongs to the archaeal/bacterial/fungal opsin family.</text>
</comment>